<gene>
    <name evidence="1" type="primary">anmK</name>
    <name type="ordered locus">IL2238</name>
</gene>
<reference key="1">
    <citation type="journal article" date="2004" name="Proc. Natl. Acad. Sci. U.S.A.">
        <title>Genome sequence of the deep-sea gamma-proteobacterium Idiomarina loihiensis reveals amino acid fermentation as a source of carbon and energy.</title>
        <authorList>
            <person name="Hou S."/>
            <person name="Saw J.H."/>
            <person name="Lee K.S."/>
            <person name="Freitas T.A."/>
            <person name="Belisle C."/>
            <person name="Kawarabayasi Y."/>
            <person name="Donachie S.P."/>
            <person name="Pikina A."/>
            <person name="Galperin M.Y."/>
            <person name="Koonin E.V."/>
            <person name="Makarova K.S."/>
            <person name="Omelchenko M.V."/>
            <person name="Sorokin A."/>
            <person name="Wolf Y.I."/>
            <person name="Li Q.X."/>
            <person name="Keum Y.S."/>
            <person name="Campbell S."/>
            <person name="Denery J."/>
            <person name="Aizawa S."/>
            <person name="Shibata S."/>
            <person name="Malahoff A."/>
            <person name="Alam M."/>
        </authorList>
    </citation>
    <scope>NUCLEOTIDE SEQUENCE [LARGE SCALE GENOMIC DNA]</scope>
    <source>
        <strain>ATCC BAA-735 / DSM 15497 / L2-TR</strain>
    </source>
</reference>
<organism>
    <name type="scientific">Idiomarina loihiensis (strain ATCC BAA-735 / DSM 15497 / L2-TR)</name>
    <dbReference type="NCBI Taxonomy" id="283942"/>
    <lineage>
        <taxon>Bacteria</taxon>
        <taxon>Pseudomonadati</taxon>
        <taxon>Pseudomonadota</taxon>
        <taxon>Gammaproteobacteria</taxon>
        <taxon>Alteromonadales</taxon>
        <taxon>Idiomarinaceae</taxon>
        <taxon>Idiomarina</taxon>
    </lineage>
</organism>
<feature type="chain" id="PRO_0000250005" description="Anhydro-N-acetylmuramic acid kinase">
    <location>
        <begin position="1"/>
        <end position="369"/>
    </location>
</feature>
<feature type="binding site" evidence="1">
    <location>
        <begin position="11"/>
        <end position="18"/>
    </location>
    <ligand>
        <name>ATP</name>
        <dbReference type="ChEBI" id="CHEBI:30616"/>
    </ligand>
</feature>
<name>ANMK_IDILO</name>
<proteinExistence type="inferred from homology"/>
<evidence type="ECO:0000255" key="1">
    <source>
        <dbReference type="HAMAP-Rule" id="MF_01270"/>
    </source>
</evidence>
<sequence>MFQRYIGLMSGTSMDAVDAALVQIDAQGTPRLEAHHSLSFPPELRTRLLALSHTDNWQADELAGLDIAFSQLSAKVVERLLEKVSIAAKDITAIASHGQTVRHKPNSIPAYTCQIGDPTRLALGTGIDVIYDFRRKDIAAGGQGAPLVPAFHKQVFSRKNQSIAVINLGGIANVTWLGHNGNILGFDTGPANTLLDQWVQHNDSSKSFDENAQFARAGKLQPDLLKRLLQHPFFAKPAPKSTGREEFNLKWLQRQLTGHNISPADVQRTLTELTAISIKDALTTLPQQPDTAYFCGGGTRNPLLMERLTQLLAPIQCDTTASLGVDPQWVEAIAFAWLGWCFEHKKPGNQPEVTGASHPVVLGAKVLHQ</sequence>
<dbReference type="EC" id="2.7.1.170" evidence="1"/>
<dbReference type="EMBL" id="AE017340">
    <property type="protein sequence ID" value="AAV83070.1"/>
    <property type="molecule type" value="Genomic_DNA"/>
</dbReference>
<dbReference type="RefSeq" id="WP_011235465.1">
    <property type="nucleotide sequence ID" value="NC_006512.1"/>
</dbReference>
<dbReference type="SMR" id="Q5QVP3"/>
<dbReference type="STRING" id="283942.IL2238"/>
<dbReference type="GeneID" id="41337427"/>
<dbReference type="KEGG" id="ilo:IL2238"/>
<dbReference type="eggNOG" id="COG2377">
    <property type="taxonomic scope" value="Bacteria"/>
</dbReference>
<dbReference type="HOGENOM" id="CLU_038782_0_0_6"/>
<dbReference type="OrthoDB" id="9763949at2"/>
<dbReference type="UniPathway" id="UPA00343"/>
<dbReference type="UniPathway" id="UPA00544"/>
<dbReference type="Proteomes" id="UP000001171">
    <property type="component" value="Chromosome"/>
</dbReference>
<dbReference type="GO" id="GO:0005524">
    <property type="term" value="F:ATP binding"/>
    <property type="evidence" value="ECO:0007669"/>
    <property type="project" value="UniProtKB-UniRule"/>
</dbReference>
<dbReference type="GO" id="GO:0016301">
    <property type="term" value="F:kinase activity"/>
    <property type="evidence" value="ECO:0007669"/>
    <property type="project" value="UniProtKB-KW"/>
</dbReference>
<dbReference type="GO" id="GO:0016773">
    <property type="term" value="F:phosphotransferase activity, alcohol group as acceptor"/>
    <property type="evidence" value="ECO:0007669"/>
    <property type="project" value="UniProtKB-UniRule"/>
</dbReference>
<dbReference type="GO" id="GO:0097175">
    <property type="term" value="P:1,6-anhydro-N-acetyl-beta-muramic acid catabolic process"/>
    <property type="evidence" value="ECO:0007669"/>
    <property type="project" value="UniProtKB-UniRule"/>
</dbReference>
<dbReference type="GO" id="GO:0006040">
    <property type="term" value="P:amino sugar metabolic process"/>
    <property type="evidence" value="ECO:0007669"/>
    <property type="project" value="InterPro"/>
</dbReference>
<dbReference type="GO" id="GO:0009254">
    <property type="term" value="P:peptidoglycan turnover"/>
    <property type="evidence" value="ECO:0007669"/>
    <property type="project" value="UniProtKB-UniRule"/>
</dbReference>
<dbReference type="CDD" id="cd24050">
    <property type="entry name" value="ASKHA_NBD_ANMK"/>
    <property type="match status" value="1"/>
</dbReference>
<dbReference type="Gene3D" id="3.30.420.40">
    <property type="match status" value="2"/>
</dbReference>
<dbReference type="HAMAP" id="MF_01270">
    <property type="entry name" value="AnhMurNAc_kinase"/>
    <property type="match status" value="1"/>
</dbReference>
<dbReference type="InterPro" id="IPR005338">
    <property type="entry name" value="Anhydro_N_Ac-Mur_kinase"/>
</dbReference>
<dbReference type="InterPro" id="IPR043129">
    <property type="entry name" value="ATPase_NBD"/>
</dbReference>
<dbReference type="NCBIfam" id="NF007139">
    <property type="entry name" value="PRK09585.1-3"/>
    <property type="match status" value="1"/>
</dbReference>
<dbReference type="PANTHER" id="PTHR30605">
    <property type="entry name" value="ANHYDRO-N-ACETYLMURAMIC ACID KINASE"/>
    <property type="match status" value="1"/>
</dbReference>
<dbReference type="PANTHER" id="PTHR30605:SF0">
    <property type="entry name" value="ANHYDRO-N-ACETYLMURAMIC ACID KINASE"/>
    <property type="match status" value="1"/>
</dbReference>
<dbReference type="Pfam" id="PF03702">
    <property type="entry name" value="AnmK"/>
    <property type="match status" value="1"/>
</dbReference>
<dbReference type="SUPFAM" id="SSF53067">
    <property type="entry name" value="Actin-like ATPase domain"/>
    <property type="match status" value="1"/>
</dbReference>
<comment type="function">
    <text evidence="1">Catalyzes the specific phosphorylation of 1,6-anhydro-N-acetylmuramic acid (anhMurNAc) with the simultaneous cleavage of the 1,6-anhydro ring, generating MurNAc-6-P. Is required for the utilization of anhMurNAc either imported from the medium or derived from its own cell wall murein, and thus plays a role in cell wall recycling.</text>
</comment>
<comment type="catalytic activity">
    <reaction evidence="1">
        <text>1,6-anhydro-N-acetyl-beta-muramate + ATP + H2O = N-acetyl-D-muramate 6-phosphate + ADP + H(+)</text>
        <dbReference type="Rhea" id="RHEA:24952"/>
        <dbReference type="ChEBI" id="CHEBI:15377"/>
        <dbReference type="ChEBI" id="CHEBI:15378"/>
        <dbReference type="ChEBI" id="CHEBI:30616"/>
        <dbReference type="ChEBI" id="CHEBI:58690"/>
        <dbReference type="ChEBI" id="CHEBI:58722"/>
        <dbReference type="ChEBI" id="CHEBI:456216"/>
        <dbReference type="EC" id="2.7.1.170"/>
    </reaction>
</comment>
<comment type="pathway">
    <text evidence="1">Amino-sugar metabolism; 1,6-anhydro-N-acetylmuramate degradation.</text>
</comment>
<comment type="pathway">
    <text evidence="1">Cell wall biogenesis; peptidoglycan recycling.</text>
</comment>
<comment type="similarity">
    <text evidence="1">Belongs to the anhydro-N-acetylmuramic acid kinase family.</text>
</comment>
<accession>Q5QVP3</accession>
<keyword id="KW-0067">ATP-binding</keyword>
<keyword id="KW-0119">Carbohydrate metabolism</keyword>
<keyword id="KW-0418">Kinase</keyword>
<keyword id="KW-0547">Nucleotide-binding</keyword>
<keyword id="KW-1185">Reference proteome</keyword>
<keyword id="KW-0808">Transferase</keyword>
<protein>
    <recommendedName>
        <fullName evidence="1">Anhydro-N-acetylmuramic acid kinase</fullName>
        <ecNumber evidence="1">2.7.1.170</ecNumber>
    </recommendedName>
    <alternativeName>
        <fullName evidence="1">AnhMurNAc kinase</fullName>
    </alternativeName>
</protein>